<sequence length="1085" mass="120353">MALHLHRAERTDLLADGLAALLSDPLPDPFATELVLVPAKGVERWLSQRLSNRLGVCAAVEFRNPRSLIAELTGTADDDPWSPDAMVWPLLGVIDESLDEPWCATLATHLGHFEMGEEYELRQGRRYAVARRLAGLFASYARQRPQLLVDWDGLPDDLAWQKALWQALCERIDADPPHIRHAKTLVQLHESPTDLPQRLSLFGHTRLPATEVELLTALATHHDLHLWLPHPSDTLWQALSTRKGPLPRREDTSHRDVGHPLLATLGRDLREMQRLLPEPDTDEFRGRSEYPDTLLGWLQSDIAADAVRPQGRHHRREDRSIQVHSCHGPSRQIDVLREVLLGLLADDPTLEPRDILVMCPDIETYAPLITAGFGLGDVVPRTRGAHINLSAHPAHKLRVRLADRALVQTNPLLAVAAQLLALAGGRATASEVLNLAESAPVRARFGFTDDDLDAITAWTREANIRWGFDQEHRRPYGVEFLHNTWRFGIDRVLAGVAMSDDSHAWLGTTLPLDDVSSNRVELAGRFADFVEKLRRTVDQLSGTRPLHEWLDALTAGIDALALADEDWPAAQMQREFAEITARAGDTATSLRLADVRALLDRHLAGRPTRANFRTGTLTVCTMVPMRSVPHRVVCLVGLDDGVFPRLGAVDGDDALARDPMTGERDIRSEDRQLLLDAILAATQTLVITYTGANEYSGQARPPAVPLAELIDTLKITTEDSALDVLTRHPLQPFDKRNVIPGALVPDEPFTFDQTALVAARASSGERAMRPAFFSDPLPPPLPDDVALEDLLNFFKDPVKGFFRALDYTLPWDVEGVSDVMPVDIDALEEWTVGDRMLSDILRGMTPAAAQQAEWRRGTLPPGQLGWRRAIALRDQCALLAAEALGFRDTDGQAYDVDIDLGGGRRLTGTVSPVFGDRLVSVTYSKLGGKHLLQSWIPLLALAAGYPDRDWLAVCIGRPARGTTPRVEGLGGPDNPVDLLADLVAIYDAGRREPLPLPVKTSYAWAEARHCGDDPEQKAGFRWRSGRYPGEDAEPAHVRAWGRDAWLRDLMQPLRPGEEFEGETHRLGAYSSRLWLPLLRAERPVR</sequence>
<reference key="1">
    <citation type="submission" date="2006-10" db="EMBL/GenBank/DDBJ databases">
        <authorList>
            <person name="Fleischmann R.D."/>
            <person name="Dodson R.J."/>
            <person name="Haft D.H."/>
            <person name="Merkel J.S."/>
            <person name="Nelson W.C."/>
            <person name="Fraser C.M."/>
        </authorList>
    </citation>
    <scope>NUCLEOTIDE SEQUENCE [LARGE SCALE GENOMIC DNA]</scope>
    <source>
        <strain>ATCC 700084 / mc(2)155</strain>
    </source>
</reference>
<reference key="2">
    <citation type="journal article" date="2007" name="Genome Biol.">
        <title>Interrupted coding sequences in Mycobacterium smegmatis: authentic mutations or sequencing errors?</title>
        <authorList>
            <person name="Deshayes C."/>
            <person name="Perrodou E."/>
            <person name="Gallien S."/>
            <person name="Euphrasie D."/>
            <person name="Schaeffer C."/>
            <person name="Van-Dorsselaer A."/>
            <person name="Poch O."/>
            <person name="Lecompte O."/>
            <person name="Reyrat J.-M."/>
        </authorList>
    </citation>
    <scope>NUCLEOTIDE SEQUENCE [LARGE SCALE GENOMIC DNA]</scope>
    <source>
        <strain>ATCC 700084 / mc(2)155</strain>
    </source>
</reference>
<reference key="3">
    <citation type="journal article" date="2009" name="Genome Res.">
        <title>Ortho-proteogenomics: multiple proteomes investigation through orthology and a new MS-based protocol.</title>
        <authorList>
            <person name="Gallien S."/>
            <person name="Perrodou E."/>
            <person name="Carapito C."/>
            <person name="Deshayes C."/>
            <person name="Reyrat J.-M."/>
            <person name="Van Dorsselaer A."/>
            <person name="Poch O."/>
            <person name="Schaeffer C."/>
            <person name="Lecompte O."/>
        </authorList>
    </citation>
    <scope>NUCLEOTIDE SEQUENCE [LARGE SCALE GENOMIC DNA]</scope>
    <source>
        <strain>ATCC 700084 / mc(2)155</strain>
    </source>
</reference>
<reference key="4">
    <citation type="journal article" date="2007" name="J. Bacteriol.">
        <title>Mycobacterial nonhomologous end joining mediates mutagenic repair of chromosomal double-strand DNA breaks.</title>
        <authorList>
            <person name="Stephanou N.C."/>
            <person name="Gao F."/>
            <person name="Bongiorno P."/>
            <person name="Ehrt S."/>
            <person name="Schnappinger D."/>
            <person name="Shuman S."/>
            <person name="Glickman M.S."/>
        </authorList>
    </citation>
    <scope>DISRUPTION PHENOTYPE</scope>
    <source>
        <strain>ATCC 700084 / mc(2)155</strain>
    </source>
</reference>
<reference key="5">
    <citation type="journal article" date="2008" name="Genes Dev.">
        <title>The pathways and outcomes of mycobacterial NHEJ depend on the structure of the broken DNA ends.</title>
        <authorList>
            <person name="Aniukwu J."/>
            <person name="Glickman M.S."/>
            <person name="Shuman S."/>
        </authorList>
    </citation>
    <scope>DISRUPTION PHENOTYPE</scope>
    <source>
        <strain>ATCC 700084 / mc(2)155</strain>
    </source>
</reference>
<reference key="6">
    <citation type="journal article" date="2011" name="Mol. Microbiol.">
        <title>Mycobacteria exploit three genetically distinct DNA double-strand break repair pathways.</title>
        <authorList>
            <person name="Gupta R."/>
            <person name="Barkan D."/>
            <person name="Redelman-Sidi G."/>
            <person name="Shuman S."/>
            <person name="Glickman M.S."/>
        </authorList>
    </citation>
    <scope>FUNCTION</scope>
    <scope>DISRUPTION PHENOTYPE</scope>
    <source>
        <strain>ATCC 700084 / mc(2)155</strain>
    </source>
</reference>
<name>RECC_MYCS2</name>
<accession>A0QS30</accession>
<accession>I7G3M1</accession>
<keyword id="KW-0067">ATP-binding</keyword>
<keyword id="KW-0227">DNA damage</keyword>
<keyword id="KW-0234">DNA repair</keyword>
<keyword id="KW-0238">DNA-binding</keyword>
<keyword id="KW-0269">Exonuclease</keyword>
<keyword id="KW-0347">Helicase</keyword>
<keyword id="KW-0378">Hydrolase</keyword>
<keyword id="KW-0540">Nuclease</keyword>
<keyword id="KW-0547">Nucleotide-binding</keyword>
<keyword id="KW-1185">Reference proteome</keyword>
<comment type="function">
    <text evidence="1 2 6">A helicase/nuclease that prepares dsDNA breaks (DSB) for recombinational DNA repair. Binds to DSBs and unwinds DNA via a highly rapid and processive ATP-dependent bidirectional helicase activity. Holoenzyme degrades any linearized DNA that is unable to undergo homologous recombination. In the holoenzyme this subunit recognizes the wild-type Chi sequence, and when added to isolated RecB increases its ATP-dependent helicase processivity (By similarity). Unlike the case in E.coli, suppresses RecA-dependent homologous recombination, is instead required for single-strand annealing pathway repair of DSB.</text>
</comment>
<comment type="subunit">
    <text evidence="3">Heterotrimer of RecB, RecC and RecD. All subunits contribute to DNA-binding.</text>
</comment>
<comment type="disruption phenotype">
    <text evidence="4 5 6">Unlike E.coli, triple recB-recC-recD deletion is no more sensitive to DNA damaging agents (UV light sensitivity, mitomycin C, methyl methanesulphonate or ionizing radiation) than wild-type; has reduced resistance to H(2)O(2) which is exacerbated by further adnA-adnB deletion. Triple mutants have no effect on homologous recombination or on NHEJ of blunt-end, 5'- or 3'-overhang DSBs or on incompatible 3'-chromosomal overhangs. However the triple mutant disrupts all single-strand annealing repair of DSB.</text>
</comment>
<comment type="miscellaneous">
    <text evidence="3">In the RecBCD complex, RecB has a slow 3'-5' helicase, an exonuclease activity and loads RecA onto ssDNA, RecD has a fast 5'-3' helicase activity, while RecC stimulates the ATPase and processivity of the RecB helicase and contributes to recognition of the Chi site.</text>
</comment>
<comment type="similarity">
    <text evidence="3">Belongs to the RecC family.</text>
</comment>
<comment type="sequence caution" evidence="7">
    <conflict type="erroneous initiation">
        <sequence resource="EMBL-CDS" id="ABK73955"/>
    </conflict>
    <text>Extended N-terminus.</text>
</comment>
<evidence type="ECO:0000250" key="1"/>
<evidence type="ECO:0000250" key="2">
    <source>
        <dbReference type="UniProtKB" id="P07648"/>
    </source>
</evidence>
<evidence type="ECO:0000255" key="3">
    <source>
        <dbReference type="HAMAP-Rule" id="MF_01486"/>
    </source>
</evidence>
<evidence type="ECO:0000269" key="4">
    <source>
    </source>
</evidence>
<evidence type="ECO:0000269" key="5">
    <source>
    </source>
</evidence>
<evidence type="ECO:0000269" key="6">
    <source>
    </source>
</evidence>
<evidence type="ECO:0000305" key="7"/>
<evidence type="ECO:0000312" key="8">
    <source>
        <dbReference type="EMBL" id="ABK73955.1"/>
    </source>
</evidence>
<evidence type="ECO:0000312" key="9">
    <source>
        <dbReference type="EMBL" id="AFP37766.1"/>
    </source>
</evidence>
<feature type="chain" id="PRO_0000425942" description="RecBCD enzyme subunit RecC">
    <location>
        <begin position="1"/>
        <end position="1085"/>
    </location>
</feature>
<organism>
    <name type="scientific">Mycolicibacterium smegmatis (strain ATCC 700084 / mc(2)155)</name>
    <name type="common">Mycobacterium smegmatis</name>
    <dbReference type="NCBI Taxonomy" id="246196"/>
    <lineage>
        <taxon>Bacteria</taxon>
        <taxon>Bacillati</taxon>
        <taxon>Actinomycetota</taxon>
        <taxon>Actinomycetes</taxon>
        <taxon>Mycobacteriales</taxon>
        <taxon>Mycobacteriaceae</taxon>
        <taxon>Mycolicibacterium</taxon>
    </lineage>
</organism>
<protein>
    <recommendedName>
        <fullName evidence="3">RecBCD enzyme subunit RecC</fullName>
    </recommendedName>
    <alternativeName>
        <fullName evidence="3">Exonuclease V subunit RecC</fullName>
        <shortName evidence="3">ExoV subunit RecC</shortName>
    </alternativeName>
    <alternativeName>
        <fullName evidence="3">Helicase/nuclease RecBCD subunit RecC</fullName>
    </alternativeName>
</protein>
<gene>
    <name evidence="3" type="primary">recC</name>
    <name evidence="8" type="ordered locus">MSMEG_1328</name>
    <name evidence="9" type="ordered locus">MSMEI_1290</name>
</gene>
<proteinExistence type="inferred from homology"/>
<dbReference type="EMBL" id="CP000480">
    <property type="protein sequence ID" value="ABK73955.1"/>
    <property type="status" value="ALT_INIT"/>
    <property type="molecule type" value="Genomic_DNA"/>
</dbReference>
<dbReference type="EMBL" id="CP001663">
    <property type="protein sequence ID" value="AFP37766.1"/>
    <property type="molecule type" value="Genomic_DNA"/>
</dbReference>
<dbReference type="RefSeq" id="WP_014877040.1">
    <property type="nucleotide sequence ID" value="NZ_SIJM01000030.1"/>
</dbReference>
<dbReference type="RefSeq" id="YP_885718.1">
    <property type="nucleotide sequence ID" value="NC_008596.1"/>
</dbReference>
<dbReference type="SMR" id="A0QS30"/>
<dbReference type="STRING" id="246196.MSMEG_1328"/>
<dbReference type="PaxDb" id="246196-MSMEI_1290"/>
<dbReference type="GeneID" id="93456171"/>
<dbReference type="KEGG" id="msb:LJ00_06620"/>
<dbReference type="KEGG" id="msg:MSMEI_1290"/>
<dbReference type="KEGG" id="msm:MSMEG_1328"/>
<dbReference type="PATRIC" id="fig|246196.19.peg.1315"/>
<dbReference type="eggNOG" id="COG1330">
    <property type="taxonomic scope" value="Bacteria"/>
</dbReference>
<dbReference type="OrthoDB" id="9762834at2"/>
<dbReference type="Proteomes" id="UP000000757">
    <property type="component" value="Chromosome"/>
</dbReference>
<dbReference type="Proteomes" id="UP000006158">
    <property type="component" value="Chromosome"/>
</dbReference>
<dbReference type="GO" id="GO:0009338">
    <property type="term" value="C:exodeoxyribonuclease V complex"/>
    <property type="evidence" value="ECO:0007669"/>
    <property type="project" value="InterPro"/>
</dbReference>
<dbReference type="GO" id="GO:0005524">
    <property type="term" value="F:ATP binding"/>
    <property type="evidence" value="ECO:0007669"/>
    <property type="project" value="UniProtKB-UniRule"/>
</dbReference>
<dbReference type="GO" id="GO:0003677">
    <property type="term" value="F:DNA binding"/>
    <property type="evidence" value="ECO:0007669"/>
    <property type="project" value="UniProtKB-UniRule"/>
</dbReference>
<dbReference type="GO" id="GO:0003678">
    <property type="term" value="F:DNA helicase activity"/>
    <property type="evidence" value="ECO:0007669"/>
    <property type="project" value="UniProtKB-UniRule"/>
</dbReference>
<dbReference type="GO" id="GO:0008854">
    <property type="term" value="F:exodeoxyribonuclease V activity"/>
    <property type="evidence" value="ECO:0007669"/>
    <property type="project" value="UniProtKB-EC"/>
</dbReference>
<dbReference type="GO" id="GO:0000724">
    <property type="term" value="P:double-strand break repair via homologous recombination"/>
    <property type="evidence" value="ECO:0007669"/>
    <property type="project" value="UniProtKB-UniRule"/>
</dbReference>
<dbReference type="Gene3D" id="1.10.10.160">
    <property type="match status" value="1"/>
</dbReference>
<dbReference type="Gene3D" id="3.40.50.10930">
    <property type="match status" value="1"/>
</dbReference>
<dbReference type="Gene3D" id="3.40.50.300">
    <property type="entry name" value="P-loop containing nucleotide triphosphate hydrolases"/>
    <property type="match status" value="2"/>
</dbReference>
<dbReference type="HAMAP" id="MF_01486">
    <property type="entry name" value="RecC"/>
    <property type="match status" value="1"/>
</dbReference>
<dbReference type="InterPro" id="IPR013986">
    <property type="entry name" value="DExx_box_DNA_helicase_dom_sf"/>
</dbReference>
<dbReference type="InterPro" id="IPR027417">
    <property type="entry name" value="P-loop_NTPase"/>
</dbReference>
<dbReference type="InterPro" id="IPR006697">
    <property type="entry name" value="RecC"/>
</dbReference>
<dbReference type="InterPro" id="IPR041500">
    <property type="entry name" value="RecC_C"/>
</dbReference>
<dbReference type="InterPro" id="IPR011335">
    <property type="entry name" value="Restrct_endonuc-II-like"/>
</dbReference>
<dbReference type="NCBIfam" id="TIGR01450">
    <property type="entry name" value="recC"/>
    <property type="match status" value="1"/>
</dbReference>
<dbReference type="PANTHER" id="PTHR30591">
    <property type="entry name" value="RECBCD ENZYME SUBUNIT RECC"/>
    <property type="match status" value="1"/>
</dbReference>
<dbReference type="PANTHER" id="PTHR30591:SF1">
    <property type="entry name" value="RECBCD ENZYME SUBUNIT RECC"/>
    <property type="match status" value="1"/>
</dbReference>
<dbReference type="Pfam" id="PF04257">
    <property type="entry name" value="Exonuc_V_gamma"/>
    <property type="match status" value="1"/>
</dbReference>
<dbReference type="Pfam" id="PF17946">
    <property type="entry name" value="RecC_C"/>
    <property type="match status" value="1"/>
</dbReference>
<dbReference type="PIRSF" id="PIRSF000980">
    <property type="entry name" value="RecC"/>
    <property type="match status" value="1"/>
</dbReference>
<dbReference type="SUPFAM" id="SSF52540">
    <property type="entry name" value="P-loop containing nucleoside triphosphate hydrolases"/>
    <property type="match status" value="2"/>
</dbReference>
<dbReference type="SUPFAM" id="SSF52980">
    <property type="entry name" value="Restriction endonuclease-like"/>
    <property type="match status" value="1"/>
</dbReference>